<keyword id="KW-0002">3D-structure</keyword>
<keyword id="KW-0007">Acetylation</keyword>
<keyword id="KW-0903">Direct protein sequencing</keyword>
<keyword id="KW-0472">Membrane</keyword>
<keyword id="KW-0496">Mitochondrion</keyword>
<keyword id="KW-0999">Mitochondrion inner membrane</keyword>
<keyword id="KW-1185">Reference proteome</keyword>
<keyword id="KW-0812">Transmembrane</keyword>
<keyword id="KW-1133">Transmembrane helix</keyword>
<protein>
    <recommendedName>
        <fullName>Cytochrome c oxidase subunit 6C</fullName>
    </recommendedName>
    <alternativeName>
        <fullName>Cytochrome c oxidase polypeptide VIc</fullName>
    </alternativeName>
</protein>
<organism>
    <name type="scientific">Mus musculus</name>
    <name type="common">Mouse</name>
    <dbReference type="NCBI Taxonomy" id="10090"/>
    <lineage>
        <taxon>Eukaryota</taxon>
        <taxon>Metazoa</taxon>
        <taxon>Chordata</taxon>
        <taxon>Craniata</taxon>
        <taxon>Vertebrata</taxon>
        <taxon>Euteleostomi</taxon>
        <taxon>Mammalia</taxon>
        <taxon>Eutheria</taxon>
        <taxon>Euarchontoglires</taxon>
        <taxon>Glires</taxon>
        <taxon>Rodentia</taxon>
        <taxon>Myomorpha</taxon>
        <taxon>Muroidea</taxon>
        <taxon>Muridae</taxon>
        <taxon>Murinae</taxon>
        <taxon>Mus</taxon>
        <taxon>Mus</taxon>
    </lineage>
</organism>
<sequence length="76" mass="8469">MSSGALLPKPQMRGLLAKRLRVHIAGAFIVALGVAAAYKFGVAEPRKKAYAEFYRNYDSMKDFEEMRKAGIFQSAK</sequence>
<evidence type="ECO:0000269" key="1">
    <source>
    </source>
</evidence>
<evidence type="ECO:0000269" key="2">
    <source>
    </source>
</evidence>
<evidence type="ECO:0000305" key="3"/>
<evidence type="ECO:0000312" key="4">
    <source>
        <dbReference type="PDB" id="7O3E"/>
    </source>
</evidence>
<evidence type="ECO:0007744" key="5">
    <source>
        <dbReference type="PDB" id="7O37"/>
    </source>
</evidence>
<evidence type="ECO:0007744" key="6">
    <source>
        <dbReference type="PDB" id="7O3C"/>
    </source>
</evidence>
<evidence type="ECO:0007744" key="7">
    <source>
        <dbReference type="PDB" id="8PW5"/>
    </source>
</evidence>
<evidence type="ECO:0007829" key="8">
    <source>
        <dbReference type="PDB" id="7O37"/>
    </source>
</evidence>
<accession>Q9CPQ1</accession>
<accession>Q52KC6</accession>
<name>COX6C_MOUSE</name>
<comment type="function">
    <text evidence="1 2">Component of the cytochrome c oxidase, the last enzyme in the mitochondrial electron transport chain which drives oxidative phosphorylation. The respiratory chain contains 3 multisubunit complexes succinate dehydrogenase (complex II, CII), ubiquinol-cytochrome c oxidoreductase (cytochrome b-c1 complex, complex III, CIII) and cytochrome c oxidase (complex IV, CIV), that cooperate to transfer electrons derived from NADH and succinate to molecular oxygen, creating an electrochemical gradient over the inner membrane that drives transmembrane transport and the ATP synthase. Cytochrome c oxidase is the component of the respiratory chain that catalyzes the reduction of oxygen to water. Electrons originating from reduced cytochrome c in the intermembrane space (IMS) are transferred via the dinuclear copper A center (CU(A)) of subunit 2 and heme A of subunit 1 to the active site in subunit 1, a binuclear center (BNC) formed by heme A3 and copper B (CU(B)). The BNC reduces molecular oxygen to 2 water molecules using 4 electrons from cytochrome c in the IMS and 4 protons from the mitochondrial matrix.</text>
</comment>
<comment type="pathway">
    <text evidence="1 2">Energy metabolism; oxidative phosphorylation.</text>
</comment>
<comment type="subunit">
    <text evidence="1 2">Component of the cytochrome c oxidase (complex IV, CIV), a multisubunit enzyme composed of 14 subunits (PubMed:34616041, PubMed:38575788). The complex is composed of a catalytic core of 3 subunits MT-CO1, MT-CO2 and MT-CO3, encoded in the mitochondrial DNA, and 11 supernumerary subunits COX4I, COX5A, COX5B, COX6A, COX6B, COX6C, COX7A, COX7B, COX7C, COX8 and NDUFA4, which are encoded in the nuclear genome (PubMed:34616041, PubMed:38575788). The complex exists as a monomer or a dimer and forms supercomplexes (SCs) in the inner mitochondrial membrane with NADH-ubiquinone oxidoreductase (complex I, CI) and ubiquinol-cytochrome c oxidoreductase (cytochrome b-c1 complex, complex III, CIII), resulting in different assemblies (supercomplex SCI(1)III(2)IV(1) and megacomplex MCI(2)III(2)IV(2)) (PubMed:34616041, PubMed:38575788).</text>
</comment>
<comment type="subcellular location">
    <subcellularLocation>
        <location evidence="1 2">Mitochondrion inner membrane</location>
        <topology evidence="1">Single-pass membrane protein</topology>
    </subcellularLocation>
</comment>
<comment type="PTM">
    <text>Acetylation of Lys-61 is observed in liver mitochondria from fasted mice but not from fed mice.</text>
</comment>
<comment type="similarity">
    <text evidence="3">Belongs to the cytochrome c oxidase subunit 6c family.</text>
</comment>
<feature type="chain" id="PRO_0000191302" description="Cytochrome c oxidase subunit 6C">
    <location>
        <begin position="1"/>
        <end position="76"/>
    </location>
</feature>
<feature type="topological domain" description="Mitochondrial matrix" evidence="1 5 6">
    <location>
        <begin position="4"/>
        <end position="22"/>
    </location>
</feature>
<feature type="transmembrane region" description="Helical" evidence="1 5 6">
    <location>
        <begin position="23"/>
        <end position="44"/>
    </location>
</feature>
<feature type="topological domain" description="Mitochondrial intermembrane" evidence="1 5 6">
    <location>
        <begin position="45"/>
        <end position="76"/>
    </location>
</feature>
<feature type="helix" evidence="8">
    <location>
        <begin position="15"/>
        <end position="55"/>
    </location>
</feature>
<feature type="helix" evidence="8">
    <location>
        <begin position="59"/>
        <end position="67"/>
    </location>
</feature>
<dbReference type="EMBL" id="AK012602">
    <property type="protein sequence ID" value="BAB28348.1"/>
    <property type="molecule type" value="mRNA"/>
</dbReference>
<dbReference type="EMBL" id="AK013459">
    <property type="protein sequence ID" value="BAB28866.1"/>
    <property type="molecule type" value="mRNA"/>
</dbReference>
<dbReference type="EMBL" id="BC024666">
    <property type="protein sequence ID" value="AAH24666.1"/>
    <property type="molecule type" value="mRNA"/>
</dbReference>
<dbReference type="EMBL" id="BC094413">
    <property type="protein sequence ID" value="AAH94413.1"/>
    <property type="molecule type" value="mRNA"/>
</dbReference>
<dbReference type="CCDS" id="CCDS27424.1"/>
<dbReference type="PIR" id="S16083">
    <property type="entry name" value="S16083"/>
</dbReference>
<dbReference type="RefSeq" id="NP_444301.1">
    <property type="nucleotide sequence ID" value="NM_053071.2"/>
</dbReference>
<dbReference type="PDB" id="7O37">
    <property type="method" value="EM"/>
    <property type="resolution" value="3.20 A"/>
    <property type="chains" value="i=2-76"/>
</dbReference>
<dbReference type="PDB" id="7O3C">
    <property type="method" value="EM"/>
    <property type="resolution" value="3.30 A"/>
    <property type="chains" value="i=2-76"/>
</dbReference>
<dbReference type="PDB" id="7O3E">
    <property type="method" value="EM"/>
    <property type="resolution" value="3.60 A"/>
    <property type="chains" value="i=2-76"/>
</dbReference>
<dbReference type="PDB" id="8PW5">
    <property type="method" value="EM"/>
    <property type="resolution" value="3.60 A"/>
    <property type="chains" value="i/v=1-76"/>
</dbReference>
<dbReference type="PDB" id="8PW6">
    <property type="method" value="EM"/>
    <property type="resolution" value="3.30 A"/>
    <property type="chains" value="v=1-76"/>
</dbReference>
<dbReference type="PDB" id="8PW7">
    <property type="method" value="EM"/>
    <property type="resolution" value="3.50 A"/>
    <property type="chains" value="v=1-76"/>
</dbReference>
<dbReference type="PDBsum" id="7O37"/>
<dbReference type="PDBsum" id="7O3C"/>
<dbReference type="PDBsum" id="7O3E"/>
<dbReference type="PDBsum" id="8PW5"/>
<dbReference type="PDBsum" id="8PW6"/>
<dbReference type="PDBsum" id="8PW7"/>
<dbReference type="EMDB" id="EMD-12702"/>
<dbReference type="EMDB" id="EMD-12703"/>
<dbReference type="EMDB" id="EMD-12705"/>
<dbReference type="EMDB" id="EMD-17989"/>
<dbReference type="EMDB" id="EMD-17990"/>
<dbReference type="EMDB" id="EMD-17991"/>
<dbReference type="SMR" id="Q9CPQ1"/>
<dbReference type="BioGRID" id="198845">
    <property type="interactions" value="51"/>
</dbReference>
<dbReference type="CORUM" id="Q9CPQ1"/>
<dbReference type="FunCoup" id="Q9CPQ1">
    <property type="interactions" value="1052"/>
</dbReference>
<dbReference type="IntAct" id="Q9CPQ1">
    <property type="interactions" value="4"/>
</dbReference>
<dbReference type="STRING" id="10090.ENSMUSP00000123609"/>
<dbReference type="GlyGen" id="Q9CPQ1">
    <property type="glycosylation" value="1 site, 1 O-linked glycan (1 site)"/>
</dbReference>
<dbReference type="iPTMnet" id="Q9CPQ1"/>
<dbReference type="PhosphoSitePlus" id="Q9CPQ1"/>
<dbReference type="SwissPalm" id="Q9CPQ1"/>
<dbReference type="jPOST" id="Q9CPQ1"/>
<dbReference type="PaxDb" id="10090-ENSMUSP00000014457"/>
<dbReference type="PeptideAtlas" id="Q9CPQ1"/>
<dbReference type="ProteomicsDB" id="283429"/>
<dbReference type="Pumba" id="Q9CPQ1"/>
<dbReference type="TopDownProteomics" id="Q9CPQ1"/>
<dbReference type="Antibodypedia" id="4263">
    <property type="antibodies" value="247 antibodies from 30 providers"/>
</dbReference>
<dbReference type="DNASU" id="12864"/>
<dbReference type="Ensembl" id="ENSMUST00000014457.15">
    <property type="protein sequence ID" value="ENSMUSP00000014457.9"/>
    <property type="gene ID" value="ENSMUSG00000014313.16"/>
</dbReference>
<dbReference type="Ensembl" id="ENSMUST00000153512.2">
    <property type="protein sequence ID" value="ENSMUSP00000123609.2"/>
    <property type="gene ID" value="ENSMUSG00000014313.16"/>
</dbReference>
<dbReference type="Ensembl" id="ENSMUST00000156915.3">
    <property type="protein sequence ID" value="ENSMUSP00000122391.3"/>
    <property type="gene ID" value="ENSMUSG00000014313.16"/>
</dbReference>
<dbReference type="GeneID" id="12864"/>
<dbReference type="KEGG" id="mmu:12864"/>
<dbReference type="UCSC" id="uc007vmi.1">
    <property type="organism name" value="mouse"/>
</dbReference>
<dbReference type="AGR" id="MGI:104614"/>
<dbReference type="CTD" id="1345"/>
<dbReference type="MGI" id="MGI:104614">
    <property type="gene designation" value="Cox6c"/>
</dbReference>
<dbReference type="VEuPathDB" id="HostDB:ENSMUSG00000014313"/>
<dbReference type="eggNOG" id="ENOG502SEI2">
    <property type="taxonomic scope" value="Eukaryota"/>
</dbReference>
<dbReference type="GeneTree" id="ENSGT00940000162275"/>
<dbReference type="HOGENOM" id="CLU_196254_0_0_1"/>
<dbReference type="InParanoid" id="Q9CPQ1"/>
<dbReference type="OMA" id="KNYDAMK"/>
<dbReference type="OrthoDB" id="10051322at2759"/>
<dbReference type="PhylomeDB" id="Q9CPQ1"/>
<dbReference type="TreeFam" id="TF353619"/>
<dbReference type="Reactome" id="R-MMU-5628897">
    <property type="pathway name" value="TP53 Regulates Metabolic Genes"/>
</dbReference>
<dbReference type="Reactome" id="R-MMU-611105">
    <property type="pathway name" value="Respiratory electron transport"/>
</dbReference>
<dbReference type="Reactome" id="R-MMU-9707564">
    <property type="pathway name" value="Cytoprotection by HMOX1"/>
</dbReference>
<dbReference type="Reactome" id="R-MMU-9864848">
    <property type="pathway name" value="Complex IV assembly"/>
</dbReference>
<dbReference type="UniPathway" id="UPA00705"/>
<dbReference type="BioGRID-ORCS" id="12864">
    <property type="hits" value="33 hits in 80 CRISPR screens"/>
</dbReference>
<dbReference type="CD-CODE" id="CE726F99">
    <property type="entry name" value="Postsynaptic density"/>
</dbReference>
<dbReference type="ChiTaRS" id="Cox6c">
    <property type="organism name" value="mouse"/>
</dbReference>
<dbReference type="PRO" id="PR:Q9CPQ1"/>
<dbReference type="Proteomes" id="UP000000589">
    <property type="component" value="Chromosome 15"/>
</dbReference>
<dbReference type="RNAct" id="Q9CPQ1">
    <property type="molecule type" value="protein"/>
</dbReference>
<dbReference type="Bgee" id="ENSMUSG00000014313">
    <property type="expression patterns" value="Expressed in gonadal fat pad and 269 other cell types or tissues"/>
</dbReference>
<dbReference type="ExpressionAtlas" id="Q9CPQ1">
    <property type="expression patterns" value="baseline and differential"/>
</dbReference>
<dbReference type="GO" id="GO:0005743">
    <property type="term" value="C:mitochondrial inner membrane"/>
    <property type="evidence" value="ECO:0000314"/>
    <property type="project" value="UniProtKB"/>
</dbReference>
<dbReference type="GO" id="GO:0005739">
    <property type="term" value="C:mitochondrion"/>
    <property type="evidence" value="ECO:0007005"/>
    <property type="project" value="MGI"/>
</dbReference>
<dbReference type="GO" id="GO:0045277">
    <property type="term" value="C:respiratory chain complex IV"/>
    <property type="evidence" value="ECO:0000314"/>
    <property type="project" value="UniProtKB"/>
</dbReference>
<dbReference type="GO" id="GO:0006119">
    <property type="term" value="P:oxidative phosphorylation"/>
    <property type="evidence" value="ECO:0007669"/>
    <property type="project" value="UniProtKB-UniPathway"/>
</dbReference>
<dbReference type="CDD" id="cd22901">
    <property type="entry name" value="CcO_VIc"/>
    <property type="match status" value="1"/>
</dbReference>
<dbReference type="FunFam" id="4.10.93.10:FF:000001">
    <property type="entry name" value="Cytochrome c oxidase subunit 6C"/>
    <property type="match status" value="1"/>
</dbReference>
<dbReference type="Gene3D" id="4.10.93.10">
    <property type="entry name" value="Mitochondrial cytochrome c oxidase subunit VIc/VIIs"/>
    <property type="match status" value="1"/>
</dbReference>
<dbReference type="InterPro" id="IPR051389">
    <property type="entry name" value="Cytochrome_c_oxidase_VIc"/>
</dbReference>
<dbReference type="InterPro" id="IPR034884">
    <property type="entry name" value="Cytochrome_c_oxidase_VIc/VIIs"/>
</dbReference>
<dbReference type="InterPro" id="IPR037169">
    <property type="entry name" value="Cytochrome_c_oxidase_VIc_sf"/>
</dbReference>
<dbReference type="PANTHER" id="PTHR48416">
    <property type="entry name" value="CYTOCHROME C OXIDASE SUBUNIT 6C"/>
    <property type="match status" value="1"/>
</dbReference>
<dbReference type="PANTHER" id="PTHR48416:SF1">
    <property type="entry name" value="CYTOCHROME C OXIDASE SUBUNIT 6C"/>
    <property type="match status" value="1"/>
</dbReference>
<dbReference type="Pfam" id="PF02937">
    <property type="entry name" value="COX6C"/>
    <property type="match status" value="1"/>
</dbReference>
<dbReference type="SUPFAM" id="SSF81415">
    <property type="entry name" value="Mitochondrial cytochrome c oxidase subunit VIc"/>
    <property type="match status" value="1"/>
</dbReference>
<proteinExistence type="evidence at protein level"/>
<reference key="1">
    <citation type="journal article" date="1991" name="Eur. J. Biochem.">
        <title>Cross reactivity of monoclonal antibodies and cDNA hybridization suggest evolutionary relationships between cytochrome c oxidase subunits VIa and VIc and between VIIa and VIIb.</title>
        <authorList>
            <person name="Schneyder B."/>
            <person name="Mell O."/>
            <person name="Anthony G."/>
            <person name="Kadenbach B."/>
        </authorList>
    </citation>
    <scope>PRELIMINARY NUCLEOTIDE SEQUENCE</scope>
</reference>
<reference key="2">
    <citation type="journal article" date="2005" name="Science">
        <title>The transcriptional landscape of the mammalian genome.</title>
        <authorList>
            <person name="Carninci P."/>
            <person name="Kasukawa T."/>
            <person name="Katayama S."/>
            <person name="Gough J."/>
            <person name="Frith M.C."/>
            <person name="Maeda N."/>
            <person name="Oyama R."/>
            <person name="Ravasi T."/>
            <person name="Lenhard B."/>
            <person name="Wells C."/>
            <person name="Kodzius R."/>
            <person name="Shimokawa K."/>
            <person name="Bajic V.B."/>
            <person name="Brenner S.E."/>
            <person name="Batalov S."/>
            <person name="Forrest A.R."/>
            <person name="Zavolan M."/>
            <person name="Davis M.J."/>
            <person name="Wilming L.G."/>
            <person name="Aidinis V."/>
            <person name="Allen J.E."/>
            <person name="Ambesi-Impiombato A."/>
            <person name="Apweiler R."/>
            <person name="Aturaliya R.N."/>
            <person name="Bailey T.L."/>
            <person name="Bansal M."/>
            <person name="Baxter L."/>
            <person name="Beisel K.W."/>
            <person name="Bersano T."/>
            <person name="Bono H."/>
            <person name="Chalk A.M."/>
            <person name="Chiu K.P."/>
            <person name="Choudhary V."/>
            <person name="Christoffels A."/>
            <person name="Clutterbuck D.R."/>
            <person name="Crowe M.L."/>
            <person name="Dalla E."/>
            <person name="Dalrymple B.P."/>
            <person name="de Bono B."/>
            <person name="Della Gatta G."/>
            <person name="di Bernardo D."/>
            <person name="Down T."/>
            <person name="Engstrom P."/>
            <person name="Fagiolini M."/>
            <person name="Faulkner G."/>
            <person name="Fletcher C.F."/>
            <person name="Fukushima T."/>
            <person name="Furuno M."/>
            <person name="Futaki S."/>
            <person name="Gariboldi M."/>
            <person name="Georgii-Hemming P."/>
            <person name="Gingeras T.R."/>
            <person name="Gojobori T."/>
            <person name="Green R.E."/>
            <person name="Gustincich S."/>
            <person name="Harbers M."/>
            <person name="Hayashi Y."/>
            <person name="Hensch T.K."/>
            <person name="Hirokawa N."/>
            <person name="Hill D."/>
            <person name="Huminiecki L."/>
            <person name="Iacono M."/>
            <person name="Ikeo K."/>
            <person name="Iwama A."/>
            <person name="Ishikawa T."/>
            <person name="Jakt M."/>
            <person name="Kanapin A."/>
            <person name="Katoh M."/>
            <person name="Kawasawa Y."/>
            <person name="Kelso J."/>
            <person name="Kitamura H."/>
            <person name="Kitano H."/>
            <person name="Kollias G."/>
            <person name="Krishnan S.P."/>
            <person name="Kruger A."/>
            <person name="Kummerfeld S.K."/>
            <person name="Kurochkin I.V."/>
            <person name="Lareau L.F."/>
            <person name="Lazarevic D."/>
            <person name="Lipovich L."/>
            <person name="Liu J."/>
            <person name="Liuni S."/>
            <person name="McWilliam S."/>
            <person name="Madan Babu M."/>
            <person name="Madera M."/>
            <person name="Marchionni L."/>
            <person name="Matsuda H."/>
            <person name="Matsuzawa S."/>
            <person name="Miki H."/>
            <person name="Mignone F."/>
            <person name="Miyake S."/>
            <person name="Morris K."/>
            <person name="Mottagui-Tabar S."/>
            <person name="Mulder N."/>
            <person name="Nakano N."/>
            <person name="Nakauchi H."/>
            <person name="Ng P."/>
            <person name="Nilsson R."/>
            <person name="Nishiguchi S."/>
            <person name="Nishikawa S."/>
            <person name="Nori F."/>
            <person name="Ohara O."/>
            <person name="Okazaki Y."/>
            <person name="Orlando V."/>
            <person name="Pang K.C."/>
            <person name="Pavan W.J."/>
            <person name="Pavesi G."/>
            <person name="Pesole G."/>
            <person name="Petrovsky N."/>
            <person name="Piazza S."/>
            <person name="Reed J."/>
            <person name="Reid J.F."/>
            <person name="Ring B.Z."/>
            <person name="Ringwald M."/>
            <person name="Rost B."/>
            <person name="Ruan Y."/>
            <person name="Salzberg S.L."/>
            <person name="Sandelin A."/>
            <person name="Schneider C."/>
            <person name="Schoenbach C."/>
            <person name="Sekiguchi K."/>
            <person name="Semple C.A."/>
            <person name="Seno S."/>
            <person name="Sessa L."/>
            <person name="Sheng Y."/>
            <person name="Shibata Y."/>
            <person name="Shimada H."/>
            <person name="Shimada K."/>
            <person name="Silva D."/>
            <person name="Sinclair B."/>
            <person name="Sperling S."/>
            <person name="Stupka E."/>
            <person name="Sugiura K."/>
            <person name="Sultana R."/>
            <person name="Takenaka Y."/>
            <person name="Taki K."/>
            <person name="Tammoja K."/>
            <person name="Tan S.L."/>
            <person name="Tang S."/>
            <person name="Taylor M.S."/>
            <person name="Tegner J."/>
            <person name="Teichmann S.A."/>
            <person name="Ueda H.R."/>
            <person name="van Nimwegen E."/>
            <person name="Verardo R."/>
            <person name="Wei C.L."/>
            <person name="Yagi K."/>
            <person name="Yamanishi H."/>
            <person name="Zabarovsky E."/>
            <person name="Zhu S."/>
            <person name="Zimmer A."/>
            <person name="Hide W."/>
            <person name="Bult C."/>
            <person name="Grimmond S.M."/>
            <person name="Teasdale R.D."/>
            <person name="Liu E.T."/>
            <person name="Brusic V."/>
            <person name="Quackenbush J."/>
            <person name="Wahlestedt C."/>
            <person name="Mattick J.S."/>
            <person name="Hume D.A."/>
            <person name="Kai C."/>
            <person name="Sasaki D."/>
            <person name="Tomaru Y."/>
            <person name="Fukuda S."/>
            <person name="Kanamori-Katayama M."/>
            <person name="Suzuki M."/>
            <person name="Aoki J."/>
            <person name="Arakawa T."/>
            <person name="Iida J."/>
            <person name="Imamura K."/>
            <person name="Itoh M."/>
            <person name="Kato T."/>
            <person name="Kawaji H."/>
            <person name="Kawagashira N."/>
            <person name="Kawashima T."/>
            <person name="Kojima M."/>
            <person name="Kondo S."/>
            <person name="Konno H."/>
            <person name="Nakano K."/>
            <person name="Ninomiya N."/>
            <person name="Nishio T."/>
            <person name="Okada M."/>
            <person name="Plessy C."/>
            <person name="Shibata K."/>
            <person name="Shiraki T."/>
            <person name="Suzuki S."/>
            <person name="Tagami M."/>
            <person name="Waki K."/>
            <person name="Watahiki A."/>
            <person name="Okamura-Oho Y."/>
            <person name="Suzuki H."/>
            <person name="Kawai J."/>
            <person name="Hayashizaki Y."/>
        </authorList>
    </citation>
    <scope>NUCLEOTIDE SEQUENCE [LARGE SCALE MRNA]</scope>
    <source>
        <strain>C57BL/6J</strain>
        <tissue>Embryo</tissue>
        <tissue>Hippocampus</tissue>
    </source>
</reference>
<reference key="3">
    <citation type="journal article" date="2004" name="Genome Res.">
        <title>The status, quality, and expansion of the NIH full-length cDNA project: the Mammalian Gene Collection (MGC).</title>
        <authorList>
            <consortium name="The MGC Project Team"/>
        </authorList>
    </citation>
    <scope>NUCLEOTIDE SEQUENCE [LARGE SCALE MRNA]</scope>
    <source>
        <strain>C57BL/6J</strain>
        <tissue>Liver</tissue>
        <tissue>Mammary gland</tissue>
    </source>
</reference>
<reference key="4">
    <citation type="submission" date="2007-04" db="UniProtKB">
        <authorList>
            <person name="Lubec G."/>
            <person name="Kang S.U."/>
        </authorList>
    </citation>
    <scope>PROTEIN SEQUENCE OF 21-38 AND 48-66</scope>
    <scope>IDENTIFICATION BY MASS SPECTROMETRY</scope>
    <source>
        <strain>C57BL/6J</strain>
        <tissue>Brain</tissue>
    </source>
</reference>
<reference key="5">
    <citation type="journal article" date="2010" name="Cell">
        <title>A tissue-specific atlas of mouse protein phosphorylation and expression.</title>
        <authorList>
            <person name="Huttlin E.L."/>
            <person name="Jedrychowski M.P."/>
            <person name="Elias J.E."/>
            <person name="Goswami T."/>
            <person name="Rad R."/>
            <person name="Beausoleil S.A."/>
            <person name="Villen J."/>
            <person name="Haas W."/>
            <person name="Sowa M.E."/>
            <person name="Gygi S.P."/>
        </authorList>
    </citation>
    <scope>IDENTIFICATION BY MASS SPECTROMETRY [LARGE SCALE ANALYSIS]</scope>
    <source>
        <tissue>Brain</tissue>
        <tissue>Brown adipose tissue</tissue>
        <tissue>Heart</tissue>
        <tissue>Kidney</tissue>
        <tissue>Liver</tissue>
        <tissue>Lung</tissue>
        <tissue>Pancreas</tissue>
        <tissue>Spleen</tissue>
        <tissue>Testis</tissue>
    </source>
</reference>
<reference evidence="4 5 6" key="6">
    <citation type="journal article" date="2021" name="Nature">
        <title>Structure and assembly of the mammalian mitochondrial supercomplex CIII2CIV.</title>
        <authorList>
            <person name="Vercellino I."/>
            <person name="Sazanov L.A."/>
        </authorList>
    </citation>
    <scope>STRUCTURE BY ELECTRON MICROSCOPY (3.20 ANGSTROMS) IN COMPLEX WITH MITOCHONDRIAL RESPIRATORY SUPERCOMPLEX</scope>
    <scope>FUNCTION</scope>
    <scope>PATHWAY</scope>
    <scope>SUBCELLULAR LOCATION</scope>
    <scope>SUBUNIT</scope>
</reference>
<reference evidence="7" key="7">
    <citation type="journal article" date="2024" name="Nat. Struct. Mol. Biol.">
        <title>SCAF1 drives the compositional diversity of mammalian respirasomes.</title>
        <authorList>
            <person name="Vercellino I."/>
            <person name="Sazanov L.A."/>
        </authorList>
    </citation>
    <scope>STRUCTURE BY ELECTRON MICROSCOPY (3.60 ANGSTROMS) IN COMPLEX WITH MITOCHONDRIAL RESPIRATORY SUPERCOMPLEX</scope>
    <scope>FUNCTION</scope>
    <scope>SUBCELLULAR LOCATION</scope>
    <scope>SUBUNIT</scope>
</reference>
<gene>
    <name type="primary">Cox6c</name>
</gene>